<protein>
    <recommendedName>
        <fullName evidence="1">ATP-dependent Clp protease proteolytic subunit</fullName>
        <ecNumber evidence="1">3.4.21.92</ecNumber>
    </recommendedName>
    <alternativeName>
        <fullName evidence="1">Endopeptidase Clp</fullName>
    </alternativeName>
</protein>
<proteinExistence type="evidence at transcript level"/>
<geneLocation type="chloroplast"/>
<organism>
    <name type="scientific">Nicotiana tabacum</name>
    <name type="common">Common tobacco</name>
    <dbReference type="NCBI Taxonomy" id="4097"/>
    <lineage>
        <taxon>Eukaryota</taxon>
        <taxon>Viridiplantae</taxon>
        <taxon>Streptophyta</taxon>
        <taxon>Embryophyta</taxon>
        <taxon>Tracheophyta</taxon>
        <taxon>Spermatophyta</taxon>
        <taxon>Magnoliopsida</taxon>
        <taxon>eudicotyledons</taxon>
        <taxon>Gunneridae</taxon>
        <taxon>Pentapetalae</taxon>
        <taxon>asterids</taxon>
        <taxon>lamiids</taxon>
        <taxon>Solanales</taxon>
        <taxon>Solanaceae</taxon>
        <taxon>Nicotianoideae</taxon>
        <taxon>Nicotianeae</taxon>
        <taxon>Nicotiana</taxon>
    </lineage>
</organism>
<keyword id="KW-0150">Chloroplast</keyword>
<keyword id="KW-0378">Hydrolase</keyword>
<keyword id="KW-0934">Plastid</keyword>
<keyword id="KW-0645">Protease</keyword>
<keyword id="KW-1185">Reference proteome</keyword>
<keyword id="KW-0720">Serine protease</keyword>
<sequence length="196" mass="22082">MPIGVPKVPFRSPGEEDASWVDVYNRLYRERLLFLGQEVDSEISNQLIGLMVYLSIEDETKDLYLFINSPGGWVIPGVAIYDTMQFVRPDVHTICMGLAASMGSFILVGGEITKRLAFPHARVMIHQPASSFYEAQTGEFVLEAEELLKLRETLTRVYVQRTGKPLWVVSEDMERDVFMSATEAQAYGIVDLVAVE</sequence>
<gene>
    <name evidence="1" type="primary">clpP</name>
</gene>
<reference key="1">
    <citation type="journal article" date="1995" name="Plant Cell">
        <title>The stroma of higher plant plastids contain ClpP and ClpC, functional homologs of Escherichia coli ClpP and ClpA: an archetypal two-component ATP-dependent protease.</title>
        <authorList>
            <person name="Shanklin J."/>
            <person name="DeWitt N.D."/>
            <person name="Flanagan J.M."/>
        </authorList>
    </citation>
    <scope>NUCLEOTIDE SEQUENCE [MRNA]</scope>
    <source>
        <tissue>Leaf</tissue>
    </source>
</reference>
<reference key="2">
    <citation type="journal article" date="1986" name="EMBO J.">
        <title>The complete nucleotide sequence of the tobacco chloroplast genome: its gene organization and expression.</title>
        <authorList>
            <person name="Shinozaki K."/>
            <person name="Ohme M."/>
            <person name="Tanaka M."/>
            <person name="Wakasugi T."/>
            <person name="Hayashida N."/>
            <person name="Matsubayashi T."/>
            <person name="Zaita N."/>
            <person name="Chunwongse J."/>
            <person name="Obokata J."/>
            <person name="Yamaguchi-Shinozaki K."/>
            <person name="Ohto C."/>
            <person name="Torazawa K."/>
            <person name="Meng B.-Y."/>
            <person name="Sugita M."/>
            <person name="Deno H."/>
            <person name="Kamogashira T."/>
            <person name="Yamada K."/>
            <person name="Kusuda J."/>
            <person name="Takaiwa F."/>
            <person name="Kato A."/>
            <person name="Tohdoh N."/>
            <person name="Shimada H."/>
            <person name="Sugiura M."/>
        </authorList>
    </citation>
    <scope>NUCLEOTIDE SEQUENCE [LARGE SCALE GENOMIC DNA]</scope>
    <source>
        <strain>cv. Bright Yellow 4</strain>
    </source>
</reference>
<reference key="3">
    <citation type="journal article" date="2001" name="Plant Cell Physiol.">
        <title>The chloroplast clpP gene, encoding a proteolytic subunit of ATP-dependent protease, is indispensable for chloroplast development in tobacco.</title>
        <authorList>
            <person name="Shikanai T."/>
            <person name="Shimizu K."/>
            <person name="Ueda K."/>
            <person name="Nishimura Y."/>
            <person name="Kuroiwa T."/>
            <person name="Hashimoto T."/>
        </authorList>
    </citation>
    <scope>FUNCTION</scope>
</reference>
<comment type="function">
    <text evidence="1 2">Cleaves peptides in various proteins in a process that requires ATP hydrolysis. Has a chymotrypsin-like activity. Plays a major role in the degradation of misfolded proteins.</text>
</comment>
<comment type="catalytic activity">
    <reaction evidence="1">
        <text>Hydrolysis of proteins to small peptides in the presence of ATP and magnesium. alpha-casein is the usual test substrate. In the absence of ATP, only oligopeptides shorter than five residues are hydrolyzed (such as succinyl-Leu-Tyr-|-NHMec, and Leu-Tyr-Leu-|-Tyr-Trp, in which cleavage of the -Tyr-|-Leu- and -Tyr-|-Trp bonds also occurs).</text>
        <dbReference type="EC" id="3.4.21.92"/>
    </reaction>
</comment>
<comment type="subunit">
    <text>Component of the chloroplastic Clp protease core complex.</text>
</comment>
<comment type="subcellular location">
    <subcellularLocation>
        <location evidence="1">Plastid</location>
        <location evidence="1">Chloroplast stroma</location>
    </subcellularLocation>
</comment>
<comment type="similarity">
    <text evidence="1">Belongs to the peptidase S14 family.</text>
</comment>
<accession>P12210</accession>
<evidence type="ECO:0000255" key="1">
    <source>
        <dbReference type="HAMAP-Rule" id="MF_00444"/>
    </source>
</evidence>
<evidence type="ECO:0000269" key="2">
    <source>
    </source>
</evidence>
<dbReference type="EC" id="3.4.21.92" evidence="1"/>
<dbReference type="EMBL" id="U32397">
    <property type="protein sequence ID" value="AAA84867.1"/>
    <property type="molecule type" value="mRNA"/>
</dbReference>
<dbReference type="EMBL" id="Z00044">
    <property type="protein sequence ID" value="CAA77422.1"/>
    <property type="molecule type" value="Genomic_DNA"/>
</dbReference>
<dbReference type="PIR" id="A05202">
    <property type="entry name" value="A05201"/>
</dbReference>
<dbReference type="RefSeq" id="NP_054525.1">
    <property type="nucleotide sequence ID" value="NC_001879.2"/>
</dbReference>
<dbReference type="SMR" id="P12210"/>
<dbReference type="MEROPS" id="S14.002"/>
<dbReference type="GeneID" id="800474"/>
<dbReference type="KEGG" id="nta:800474"/>
<dbReference type="OMA" id="WVDVYNR"/>
<dbReference type="OrthoDB" id="1882605at2759"/>
<dbReference type="BRENDA" id="3.4.21.92">
    <property type="organism ID" value="3645"/>
</dbReference>
<dbReference type="Proteomes" id="UP000084051">
    <property type="component" value="Unplaced"/>
</dbReference>
<dbReference type="GO" id="GO:0009570">
    <property type="term" value="C:chloroplast stroma"/>
    <property type="evidence" value="ECO:0007669"/>
    <property type="project" value="UniProtKB-SubCell"/>
</dbReference>
<dbReference type="GO" id="GO:0004176">
    <property type="term" value="F:ATP-dependent peptidase activity"/>
    <property type="evidence" value="ECO:0007669"/>
    <property type="project" value="InterPro"/>
</dbReference>
<dbReference type="GO" id="GO:0004252">
    <property type="term" value="F:serine-type endopeptidase activity"/>
    <property type="evidence" value="ECO:0007669"/>
    <property type="project" value="UniProtKB-UniRule"/>
</dbReference>
<dbReference type="GO" id="GO:0006508">
    <property type="term" value="P:proteolysis"/>
    <property type="evidence" value="ECO:0007669"/>
    <property type="project" value="UniProtKB-UniRule"/>
</dbReference>
<dbReference type="CDD" id="cd07017">
    <property type="entry name" value="S14_ClpP_2"/>
    <property type="match status" value="1"/>
</dbReference>
<dbReference type="FunFam" id="3.90.226.10:FF:000006">
    <property type="entry name" value="ATP-dependent Clp protease proteolytic subunit"/>
    <property type="match status" value="1"/>
</dbReference>
<dbReference type="Gene3D" id="3.90.226.10">
    <property type="entry name" value="2-enoyl-CoA Hydratase, Chain A, domain 1"/>
    <property type="match status" value="1"/>
</dbReference>
<dbReference type="HAMAP" id="MF_00444">
    <property type="entry name" value="ClpP"/>
    <property type="match status" value="1"/>
</dbReference>
<dbReference type="InterPro" id="IPR001907">
    <property type="entry name" value="ClpP"/>
</dbReference>
<dbReference type="InterPro" id="IPR029045">
    <property type="entry name" value="ClpP/crotonase-like_dom_sf"/>
</dbReference>
<dbReference type="InterPro" id="IPR023562">
    <property type="entry name" value="ClpP/TepA"/>
</dbReference>
<dbReference type="InterPro" id="IPR033135">
    <property type="entry name" value="ClpP_His_AS"/>
</dbReference>
<dbReference type="InterPro" id="IPR018215">
    <property type="entry name" value="ClpP_Ser_AS"/>
</dbReference>
<dbReference type="PANTHER" id="PTHR10381">
    <property type="entry name" value="ATP-DEPENDENT CLP PROTEASE PROTEOLYTIC SUBUNIT"/>
    <property type="match status" value="1"/>
</dbReference>
<dbReference type="PANTHER" id="PTHR10381:SF15">
    <property type="entry name" value="CHLOROPLASTIC ATP-DEPENDENT CLP PROTEASE PROTEOLYTIC SUBUNIT 1"/>
    <property type="match status" value="1"/>
</dbReference>
<dbReference type="Pfam" id="PF00574">
    <property type="entry name" value="CLP_protease"/>
    <property type="match status" value="1"/>
</dbReference>
<dbReference type="PRINTS" id="PR00127">
    <property type="entry name" value="CLPPROTEASEP"/>
</dbReference>
<dbReference type="SUPFAM" id="SSF52096">
    <property type="entry name" value="ClpP/crotonase"/>
    <property type="match status" value="1"/>
</dbReference>
<dbReference type="PROSITE" id="PS00382">
    <property type="entry name" value="CLP_PROTEASE_HIS"/>
    <property type="match status" value="1"/>
</dbReference>
<dbReference type="PROSITE" id="PS00381">
    <property type="entry name" value="CLP_PROTEASE_SER"/>
    <property type="match status" value="1"/>
</dbReference>
<name>CLPP_TOBAC</name>
<feature type="chain" id="PRO_0000179760" description="ATP-dependent Clp protease proteolytic subunit">
    <location>
        <begin position="1"/>
        <end position="196"/>
    </location>
</feature>
<feature type="active site" description="Nucleophile" evidence="1">
    <location>
        <position position="101"/>
    </location>
</feature>
<feature type="active site" evidence="1">
    <location>
        <position position="126"/>
    </location>
</feature>